<accession>Q1QYT5</accession>
<proteinExistence type="inferred from homology"/>
<gene>
    <name evidence="1" type="primary">mtgA</name>
    <name type="ordered locus">Csal_1016</name>
</gene>
<name>MTGA_CHRSD</name>
<evidence type="ECO:0000255" key="1">
    <source>
        <dbReference type="HAMAP-Rule" id="MF_00766"/>
    </source>
</evidence>
<sequence length="234" mass="26975">MTRDWLRRGLRFLLFAMLGFVGLSVLLVLVFRVVPVFGSMVMLERKVESWVSGEPVSIQQQWRPWNALSDNAKLAVIASEDQRFPMHHGFDFNQMQKALDAWFSGDSLRGASTISQQTAKNLFLWTDRSWVRKGLEAWFTVLIELLWPKERILEVYLNIVEWDRGVFGLEAAAQHYFGVSADRLSAAQASRLAAILPNPREWSASRPSSYIVKRSQWIQRQMRQLGGSAYLERL</sequence>
<feature type="chain" id="PRO_0000257665" description="Biosynthetic peptidoglycan transglycosylase">
    <location>
        <begin position="1"/>
        <end position="234"/>
    </location>
</feature>
<feature type="transmembrane region" description="Helical" evidence="1">
    <location>
        <begin position="11"/>
        <end position="31"/>
    </location>
</feature>
<keyword id="KW-0997">Cell inner membrane</keyword>
<keyword id="KW-1003">Cell membrane</keyword>
<keyword id="KW-0133">Cell shape</keyword>
<keyword id="KW-0961">Cell wall biogenesis/degradation</keyword>
<keyword id="KW-0328">Glycosyltransferase</keyword>
<keyword id="KW-0472">Membrane</keyword>
<keyword id="KW-0573">Peptidoglycan synthesis</keyword>
<keyword id="KW-1185">Reference proteome</keyword>
<keyword id="KW-0808">Transferase</keyword>
<keyword id="KW-0812">Transmembrane</keyword>
<keyword id="KW-1133">Transmembrane helix</keyword>
<comment type="function">
    <text evidence="1">Peptidoglycan polymerase that catalyzes glycan chain elongation from lipid-linked precursors.</text>
</comment>
<comment type="catalytic activity">
    <reaction evidence="1">
        <text>[GlcNAc-(1-&gt;4)-Mur2Ac(oyl-L-Ala-gamma-D-Glu-L-Lys-D-Ala-D-Ala)](n)-di-trans,octa-cis-undecaprenyl diphosphate + beta-D-GlcNAc-(1-&gt;4)-Mur2Ac(oyl-L-Ala-gamma-D-Glu-L-Lys-D-Ala-D-Ala)-di-trans,octa-cis-undecaprenyl diphosphate = [GlcNAc-(1-&gt;4)-Mur2Ac(oyl-L-Ala-gamma-D-Glu-L-Lys-D-Ala-D-Ala)](n+1)-di-trans,octa-cis-undecaprenyl diphosphate + di-trans,octa-cis-undecaprenyl diphosphate + H(+)</text>
        <dbReference type="Rhea" id="RHEA:23708"/>
        <dbReference type="Rhea" id="RHEA-COMP:9602"/>
        <dbReference type="Rhea" id="RHEA-COMP:9603"/>
        <dbReference type="ChEBI" id="CHEBI:15378"/>
        <dbReference type="ChEBI" id="CHEBI:58405"/>
        <dbReference type="ChEBI" id="CHEBI:60033"/>
        <dbReference type="ChEBI" id="CHEBI:78435"/>
        <dbReference type="EC" id="2.4.99.28"/>
    </reaction>
</comment>
<comment type="pathway">
    <text evidence="1">Cell wall biogenesis; peptidoglycan biosynthesis.</text>
</comment>
<comment type="subcellular location">
    <subcellularLocation>
        <location evidence="1">Cell inner membrane</location>
        <topology evidence="1">Single-pass membrane protein</topology>
    </subcellularLocation>
</comment>
<comment type="similarity">
    <text evidence="1">Belongs to the glycosyltransferase 51 family.</text>
</comment>
<protein>
    <recommendedName>
        <fullName evidence="1">Biosynthetic peptidoglycan transglycosylase</fullName>
        <ecNumber evidence="1">2.4.99.28</ecNumber>
    </recommendedName>
    <alternativeName>
        <fullName evidence="1">Glycan polymerase</fullName>
    </alternativeName>
    <alternativeName>
        <fullName evidence="1">Peptidoglycan glycosyltransferase MtgA</fullName>
        <shortName evidence="1">PGT</shortName>
    </alternativeName>
</protein>
<dbReference type="EC" id="2.4.99.28" evidence="1"/>
<dbReference type="EMBL" id="CP000285">
    <property type="protein sequence ID" value="ABE58373.1"/>
    <property type="molecule type" value="Genomic_DNA"/>
</dbReference>
<dbReference type="RefSeq" id="WP_011506319.1">
    <property type="nucleotide sequence ID" value="NC_007963.1"/>
</dbReference>
<dbReference type="SMR" id="Q1QYT5"/>
<dbReference type="STRING" id="290398.Csal_1016"/>
<dbReference type="CAZy" id="GT51">
    <property type="family name" value="Glycosyltransferase Family 51"/>
</dbReference>
<dbReference type="GeneID" id="95333771"/>
<dbReference type="KEGG" id="csa:Csal_1016"/>
<dbReference type="eggNOG" id="COG0744">
    <property type="taxonomic scope" value="Bacteria"/>
</dbReference>
<dbReference type="HOGENOM" id="CLU_006354_1_1_6"/>
<dbReference type="OrthoDB" id="9766909at2"/>
<dbReference type="UniPathway" id="UPA00219"/>
<dbReference type="Proteomes" id="UP000000239">
    <property type="component" value="Chromosome"/>
</dbReference>
<dbReference type="GO" id="GO:0009274">
    <property type="term" value="C:peptidoglycan-based cell wall"/>
    <property type="evidence" value="ECO:0007669"/>
    <property type="project" value="InterPro"/>
</dbReference>
<dbReference type="GO" id="GO:0005886">
    <property type="term" value="C:plasma membrane"/>
    <property type="evidence" value="ECO:0007669"/>
    <property type="project" value="UniProtKB-SubCell"/>
</dbReference>
<dbReference type="GO" id="GO:0016763">
    <property type="term" value="F:pentosyltransferase activity"/>
    <property type="evidence" value="ECO:0007669"/>
    <property type="project" value="InterPro"/>
</dbReference>
<dbReference type="GO" id="GO:0008955">
    <property type="term" value="F:peptidoglycan glycosyltransferase activity"/>
    <property type="evidence" value="ECO:0007669"/>
    <property type="project" value="UniProtKB-UniRule"/>
</dbReference>
<dbReference type="GO" id="GO:0071555">
    <property type="term" value="P:cell wall organization"/>
    <property type="evidence" value="ECO:0007669"/>
    <property type="project" value="UniProtKB-KW"/>
</dbReference>
<dbReference type="GO" id="GO:0009252">
    <property type="term" value="P:peptidoglycan biosynthetic process"/>
    <property type="evidence" value="ECO:0007669"/>
    <property type="project" value="UniProtKB-UniRule"/>
</dbReference>
<dbReference type="GO" id="GO:0008360">
    <property type="term" value="P:regulation of cell shape"/>
    <property type="evidence" value="ECO:0007669"/>
    <property type="project" value="UniProtKB-KW"/>
</dbReference>
<dbReference type="Gene3D" id="1.10.3810.10">
    <property type="entry name" value="Biosynthetic peptidoglycan transglycosylase-like"/>
    <property type="match status" value="1"/>
</dbReference>
<dbReference type="HAMAP" id="MF_00766">
    <property type="entry name" value="PGT_MtgA"/>
    <property type="match status" value="1"/>
</dbReference>
<dbReference type="InterPro" id="IPR001264">
    <property type="entry name" value="Glyco_trans_51"/>
</dbReference>
<dbReference type="InterPro" id="IPR023346">
    <property type="entry name" value="Lysozyme-like_dom_sf"/>
</dbReference>
<dbReference type="InterPro" id="IPR036950">
    <property type="entry name" value="PBP_transglycosylase"/>
</dbReference>
<dbReference type="InterPro" id="IPR011812">
    <property type="entry name" value="Pep_trsgly"/>
</dbReference>
<dbReference type="NCBIfam" id="TIGR02070">
    <property type="entry name" value="mono_pep_trsgly"/>
    <property type="match status" value="1"/>
</dbReference>
<dbReference type="PANTHER" id="PTHR30400:SF0">
    <property type="entry name" value="BIOSYNTHETIC PEPTIDOGLYCAN TRANSGLYCOSYLASE"/>
    <property type="match status" value="1"/>
</dbReference>
<dbReference type="PANTHER" id="PTHR30400">
    <property type="entry name" value="MONOFUNCTIONAL BIOSYNTHETIC PEPTIDOGLYCAN TRANSGLYCOSYLASE"/>
    <property type="match status" value="1"/>
</dbReference>
<dbReference type="Pfam" id="PF00912">
    <property type="entry name" value="Transgly"/>
    <property type="match status" value="1"/>
</dbReference>
<dbReference type="SUPFAM" id="SSF53955">
    <property type="entry name" value="Lysozyme-like"/>
    <property type="match status" value="1"/>
</dbReference>
<organism>
    <name type="scientific">Chromohalobacter salexigens (strain ATCC BAA-138 / DSM 3043 / CIP 106854 / NCIMB 13768 / 1H11)</name>
    <dbReference type="NCBI Taxonomy" id="290398"/>
    <lineage>
        <taxon>Bacteria</taxon>
        <taxon>Pseudomonadati</taxon>
        <taxon>Pseudomonadota</taxon>
        <taxon>Gammaproteobacteria</taxon>
        <taxon>Oceanospirillales</taxon>
        <taxon>Halomonadaceae</taxon>
        <taxon>Chromohalobacter</taxon>
    </lineage>
</organism>
<reference key="1">
    <citation type="journal article" date="2011" name="Stand. Genomic Sci.">
        <title>Complete genome sequence of the halophilic and highly halotolerant Chromohalobacter salexigens type strain (1H11(T)).</title>
        <authorList>
            <person name="Copeland A."/>
            <person name="O'Connor K."/>
            <person name="Lucas S."/>
            <person name="Lapidus A."/>
            <person name="Berry K.W."/>
            <person name="Detter J.C."/>
            <person name="Del Rio T.G."/>
            <person name="Hammon N."/>
            <person name="Dalin E."/>
            <person name="Tice H."/>
            <person name="Pitluck S."/>
            <person name="Bruce D."/>
            <person name="Goodwin L."/>
            <person name="Han C."/>
            <person name="Tapia R."/>
            <person name="Saunders E."/>
            <person name="Schmutz J."/>
            <person name="Brettin T."/>
            <person name="Larimer F."/>
            <person name="Land M."/>
            <person name="Hauser L."/>
            <person name="Vargas C."/>
            <person name="Nieto J.J."/>
            <person name="Kyrpides N.C."/>
            <person name="Ivanova N."/>
            <person name="Goker M."/>
            <person name="Klenk H.P."/>
            <person name="Csonka L.N."/>
            <person name="Woyke T."/>
        </authorList>
    </citation>
    <scope>NUCLEOTIDE SEQUENCE [LARGE SCALE GENOMIC DNA]</scope>
    <source>
        <strain>ATCC BAA-138 / DSM 3043 / CIP 106854 / NCIMB 13768 / 1H11</strain>
    </source>
</reference>